<accession>B4SCR5</accession>
<feature type="chain" id="PRO_1000099504" description="UvrABC system protein C">
    <location>
        <begin position="1"/>
        <end position="627"/>
    </location>
</feature>
<feature type="domain" description="GIY-YIG" evidence="1">
    <location>
        <begin position="26"/>
        <end position="105"/>
    </location>
</feature>
<feature type="domain" description="UVR" evidence="1">
    <location>
        <begin position="219"/>
        <end position="254"/>
    </location>
</feature>
<gene>
    <name evidence="1" type="primary">uvrC</name>
    <name type="ordered locus">Ppha_2063</name>
</gene>
<evidence type="ECO:0000255" key="1">
    <source>
        <dbReference type="HAMAP-Rule" id="MF_00203"/>
    </source>
</evidence>
<protein>
    <recommendedName>
        <fullName evidence="1">UvrABC system protein C</fullName>
        <shortName evidence="1">Protein UvrC</shortName>
    </recommendedName>
    <alternativeName>
        <fullName evidence="1">Excinuclease ABC subunit C</fullName>
    </alternativeName>
</protein>
<proteinExistence type="inferred from homology"/>
<sequence>MDIEDELPARTDRKKALVEKLGTLPPSPGVYQFRNSSGRVIYVGKAKNLRNRVRSYFRNQQQLYGKTLVLVTHIADFEVIITSSEVEALILENNMIKELKPRYNVNLKDDKTYPYLVITNEPFPRILISRQRRKDGSTWFGPYTESRQLHSILDLIGSIFPVRSCKFRLSEENIATKKYKVCLDYHIHKCKGPCEGRQSEEEYLLMIAEITRLLKGKTSTMIRSLTSAMQLFARELKFERAAEIKMQLESLKRYAERQKVVAGDGLDRDVFAVATGEEDGCGVVFKIREGKLLGSQRIYMNNVTGETDSGLQARVMEKYYLETLELLPDEILLQESLGADEEETLRALFSEKEREEAQEKKNIRFLVPQIGEKAHLVEMCRQNARHHLEEYLIQKQKRGEAAREHYGLTALKELLHLPKLPQRIECFDNSHLQGTDYVSSMICFEKGKPKKADYRKFKINSFEGSDDYAAMEEVIRRRYSGSLSSKLPWPDLIVVDGGKGQVNIAFQTLNALGLSIPIIGLAKRIEEIFTPQARDPFNLPKTSPALKLLQQMRDEAHRFAITYHRKLRSERMLQTELTTIAGIGEKTAFKLLERFGSVDAVAQATLEELTAAAGAKTATAIYRFYRP</sequence>
<dbReference type="EMBL" id="CP001110">
    <property type="protein sequence ID" value="ACF44270.1"/>
    <property type="molecule type" value="Genomic_DNA"/>
</dbReference>
<dbReference type="RefSeq" id="WP_012508749.1">
    <property type="nucleotide sequence ID" value="NC_011060.1"/>
</dbReference>
<dbReference type="SMR" id="B4SCR5"/>
<dbReference type="STRING" id="324925.Ppha_2063"/>
<dbReference type="KEGG" id="pph:Ppha_2063"/>
<dbReference type="eggNOG" id="COG0322">
    <property type="taxonomic scope" value="Bacteria"/>
</dbReference>
<dbReference type="HOGENOM" id="CLU_014841_3_2_10"/>
<dbReference type="OrthoDB" id="9804933at2"/>
<dbReference type="Proteomes" id="UP000002724">
    <property type="component" value="Chromosome"/>
</dbReference>
<dbReference type="GO" id="GO:0005737">
    <property type="term" value="C:cytoplasm"/>
    <property type="evidence" value="ECO:0007669"/>
    <property type="project" value="UniProtKB-SubCell"/>
</dbReference>
<dbReference type="GO" id="GO:0009380">
    <property type="term" value="C:excinuclease repair complex"/>
    <property type="evidence" value="ECO:0007669"/>
    <property type="project" value="InterPro"/>
</dbReference>
<dbReference type="GO" id="GO:0003677">
    <property type="term" value="F:DNA binding"/>
    <property type="evidence" value="ECO:0007669"/>
    <property type="project" value="UniProtKB-UniRule"/>
</dbReference>
<dbReference type="GO" id="GO:0009381">
    <property type="term" value="F:excinuclease ABC activity"/>
    <property type="evidence" value="ECO:0007669"/>
    <property type="project" value="UniProtKB-UniRule"/>
</dbReference>
<dbReference type="GO" id="GO:0006289">
    <property type="term" value="P:nucleotide-excision repair"/>
    <property type="evidence" value="ECO:0007669"/>
    <property type="project" value="UniProtKB-UniRule"/>
</dbReference>
<dbReference type="GO" id="GO:0009432">
    <property type="term" value="P:SOS response"/>
    <property type="evidence" value="ECO:0007669"/>
    <property type="project" value="UniProtKB-UniRule"/>
</dbReference>
<dbReference type="CDD" id="cd10434">
    <property type="entry name" value="GIY-YIG_UvrC_Cho"/>
    <property type="match status" value="1"/>
</dbReference>
<dbReference type="FunFam" id="3.30.420.340:FF:000001">
    <property type="entry name" value="UvrABC system protein C"/>
    <property type="match status" value="1"/>
</dbReference>
<dbReference type="FunFam" id="3.40.1440.10:FF:000001">
    <property type="entry name" value="UvrABC system protein C"/>
    <property type="match status" value="1"/>
</dbReference>
<dbReference type="Gene3D" id="1.10.150.20">
    <property type="entry name" value="5' to 3' exonuclease, C-terminal subdomain"/>
    <property type="match status" value="1"/>
</dbReference>
<dbReference type="Gene3D" id="3.40.1440.10">
    <property type="entry name" value="GIY-YIG endonuclease"/>
    <property type="match status" value="1"/>
</dbReference>
<dbReference type="Gene3D" id="3.30.420.340">
    <property type="entry name" value="UvrC, RNAse H endonuclease domain"/>
    <property type="match status" value="1"/>
</dbReference>
<dbReference type="HAMAP" id="MF_00203">
    <property type="entry name" value="UvrC"/>
    <property type="match status" value="1"/>
</dbReference>
<dbReference type="InterPro" id="IPR000305">
    <property type="entry name" value="GIY-YIG_endonuc"/>
</dbReference>
<dbReference type="InterPro" id="IPR035901">
    <property type="entry name" value="GIY-YIG_endonuc_sf"/>
</dbReference>
<dbReference type="InterPro" id="IPR047296">
    <property type="entry name" value="GIY-YIG_UvrC_Cho"/>
</dbReference>
<dbReference type="InterPro" id="IPR010994">
    <property type="entry name" value="RuvA_2-like"/>
</dbReference>
<dbReference type="InterPro" id="IPR001943">
    <property type="entry name" value="UVR_dom"/>
</dbReference>
<dbReference type="InterPro" id="IPR036876">
    <property type="entry name" value="UVR_dom_sf"/>
</dbReference>
<dbReference type="InterPro" id="IPR050066">
    <property type="entry name" value="UvrABC_protein_C"/>
</dbReference>
<dbReference type="InterPro" id="IPR004791">
    <property type="entry name" value="UvrC"/>
</dbReference>
<dbReference type="InterPro" id="IPR001162">
    <property type="entry name" value="UvrC_RNase_H_dom"/>
</dbReference>
<dbReference type="InterPro" id="IPR038476">
    <property type="entry name" value="UvrC_RNase_H_dom_sf"/>
</dbReference>
<dbReference type="NCBIfam" id="NF001824">
    <property type="entry name" value="PRK00558.1-5"/>
    <property type="match status" value="1"/>
</dbReference>
<dbReference type="NCBIfam" id="TIGR00194">
    <property type="entry name" value="uvrC"/>
    <property type="match status" value="1"/>
</dbReference>
<dbReference type="PANTHER" id="PTHR30562:SF1">
    <property type="entry name" value="UVRABC SYSTEM PROTEIN C"/>
    <property type="match status" value="1"/>
</dbReference>
<dbReference type="PANTHER" id="PTHR30562">
    <property type="entry name" value="UVRC/OXIDOREDUCTASE"/>
    <property type="match status" value="1"/>
</dbReference>
<dbReference type="Pfam" id="PF01541">
    <property type="entry name" value="GIY-YIG"/>
    <property type="match status" value="1"/>
</dbReference>
<dbReference type="Pfam" id="PF14520">
    <property type="entry name" value="HHH_5"/>
    <property type="match status" value="1"/>
</dbReference>
<dbReference type="Pfam" id="PF02151">
    <property type="entry name" value="UVR"/>
    <property type="match status" value="1"/>
</dbReference>
<dbReference type="Pfam" id="PF22920">
    <property type="entry name" value="UvrC_RNaseH"/>
    <property type="match status" value="1"/>
</dbReference>
<dbReference type="Pfam" id="PF08459">
    <property type="entry name" value="UvrC_RNaseH_dom"/>
    <property type="match status" value="1"/>
</dbReference>
<dbReference type="SMART" id="SM00465">
    <property type="entry name" value="GIYc"/>
    <property type="match status" value="1"/>
</dbReference>
<dbReference type="SUPFAM" id="SSF46600">
    <property type="entry name" value="C-terminal UvrC-binding domain of UvrB"/>
    <property type="match status" value="1"/>
</dbReference>
<dbReference type="SUPFAM" id="SSF82771">
    <property type="entry name" value="GIY-YIG endonuclease"/>
    <property type="match status" value="1"/>
</dbReference>
<dbReference type="SUPFAM" id="SSF47781">
    <property type="entry name" value="RuvA domain 2-like"/>
    <property type="match status" value="1"/>
</dbReference>
<dbReference type="PROSITE" id="PS50164">
    <property type="entry name" value="GIY_YIG"/>
    <property type="match status" value="1"/>
</dbReference>
<dbReference type="PROSITE" id="PS50151">
    <property type="entry name" value="UVR"/>
    <property type="match status" value="1"/>
</dbReference>
<dbReference type="PROSITE" id="PS50165">
    <property type="entry name" value="UVRC"/>
    <property type="match status" value="1"/>
</dbReference>
<reference key="1">
    <citation type="submission" date="2008-06" db="EMBL/GenBank/DDBJ databases">
        <title>Complete sequence of Pelodictyon phaeoclathratiforme BU-1.</title>
        <authorList>
            <consortium name="US DOE Joint Genome Institute"/>
            <person name="Lucas S."/>
            <person name="Copeland A."/>
            <person name="Lapidus A."/>
            <person name="Glavina del Rio T."/>
            <person name="Dalin E."/>
            <person name="Tice H."/>
            <person name="Bruce D."/>
            <person name="Goodwin L."/>
            <person name="Pitluck S."/>
            <person name="Schmutz J."/>
            <person name="Larimer F."/>
            <person name="Land M."/>
            <person name="Hauser L."/>
            <person name="Kyrpides N."/>
            <person name="Mikhailova N."/>
            <person name="Liu Z."/>
            <person name="Li T."/>
            <person name="Zhao F."/>
            <person name="Overmann J."/>
            <person name="Bryant D.A."/>
            <person name="Richardson P."/>
        </authorList>
    </citation>
    <scope>NUCLEOTIDE SEQUENCE [LARGE SCALE GENOMIC DNA]</scope>
    <source>
        <strain>DSM 5477 / BU-1</strain>
    </source>
</reference>
<keyword id="KW-0963">Cytoplasm</keyword>
<keyword id="KW-0227">DNA damage</keyword>
<keyword id="KW-0228">DNA excision</keyword>
<keyword id="KW-0234">DNA repair</keyword>
<keyword id="KW-0267">Excision nuclease</keyword>
<keyword id="KW-1185">Reference proteome</keyword>
<keyword id="KW-0742">SOS response</keyword>
<organism>
    <name type="scientific">Pelodictyon phaeoclathratiforme (strain DSM 5477 / BU-1)</name>
    <dbReference type="NCBI Taxonomy" id="324925"/>
    <lineage>
        <taxon>Bacteria</taxon>
        <taxon>Pseudomonadati</taxon>
        <taxon>Chlorobiota</taxon>
        <taxon>Chlorobiia</taxon>
        <taxon>Chlorobiales</taxon>
        <taxon>Chlorobiaceae</taxon>
        <taxon>Chlorobium/Pelodictyon group</taxon>
        <taxon>Pelodictyon</taxon>
    </lineage>
</organism>
<name>UVRC_PELPB</name>
<comment type="function">
    <text evidence="1">The UvrABC repair system catalyzes the recognition and processing of DNA lesions. UvrC both incises the 5' and 3' sides of the lesion. The N-terminal half is responsible for the 3' incision and the C-terminal half is responsible for the 5' incision.</text>
</comment>
<comment type="subunit">
    <text evidence="1">Interacts with UvrB in an incision complex.</text>
</comment>
<comment type="subcellular location">
    <subcellularLocation>
        <location evidence="1">Cytoplasm</location>
    </subcellularLocation>
</comment>
<comment type="similarity">
    <text evidence="1">Belongs to the UvrC family.</text>
</comment>